<protein>
    <recommendedName>
        <fullName>Molybdate/tungstate transport system permease protein WtpB</fullName>
    </recommendedName>
</protein>
<feature type="chain" id="PRO_0000338497" description="Molybdate/tungstate transport system permease protein WtpB">
    <location>
        <begin position="1"/>
        <end position="248"/>
    </location>
</feature>
<feature type="topological domain" description="Cytoplasmic" evidence="2">
    <location>
        <begin position="1"/>
        <end position="9"/>
    </location>
</feature>
<feature type="transmembrane region" description="Helical" evidence="3">
    <location>
        <begin position="10"/>
        <end position="30"/>
    </location>
</feature>
<feature type="topological domain" description="Extracellular" evidence="2">
    <location>
        <begin position="31"/>
        <end position="56"/>
    </location>
</feature>
<feature type="transmembrane region" description="Helical" evidence="3">
    <location>
        <begin position="57"/>
        <end position="77"/>
    </location>
</feature>
<feature type="topological domain" description="Cytoplasmic" evidence="2">
    <location>
        <begin position="78"/>
        <end position="91"/>
    </location>
</feature>
<feature type="transmembrane region" description="Helical" evidence="3">
    <location>
        <begin position="92"/>
        <end position="112"/>
    </location>
</feature>
<feature type="topological domain" description="Extracellular" evidence="2">
    <location>
        <begin position="113"/>
        <end position="115"/>
    </location>
</feature>
<feature type="transmembrane region" description="Helical" evidence="3">
    <location>
        <begin position="116"/>
        <end position="136"/>
    </location>
</feature>
<feature type="topological domain" description="Cytoplasmic" evidence="2">
    <location>
        <begin position="137"/>
        <end position="164"/>
    </location>
</feature>
<feature type="transmembrane region" description="Helical" evidence="3">
    <location>
        <begin position="165"/>
        <end position="185"/>
    </location>
</feature>
<feature type="topological domain" description="Extracellular" evidence="2">
    <location>
        <begin position="186"/>
        <end position="223"/>
    </location>
</feature>
<feature type="transmembrane region" description="Helical" evidence="3">
    <location>
        <begin position="224"/>
        <end position="244"/>
    </location>
</feature>
<feature type="topological domain" description="Cytoplasmic" evidence="2">
    <location>
        <begin position="245"/>
        <end position="248"/>
    </location>
</feature>
<feature type="domain" description="ABC transmembrane type-1" evidence="3">
    <location>
        <begin position="53"/>
        <end position="239"/>
    </location>
</feature>
<name>WTPB_PYRAB</name>
<sequence>MGGRDYTLYLFAALGSFLIVYIALPIIVIFTKQALDFRMLVKTIHDPLVIEALRNSLLTATATALISLLFGVPLGYVLARKDFRGKSLVQAIIDVPIVIPHSVVGIMLLVTFSNAILDSYKGIIAAMLFVSAPFAINSARDGFLAVDEKLEHVARTLGASKLRTFFSISLPIALPSIASGAIMAWARGISEVGAILIVAYYPKTAQVLVMEYFNNYGLRASRPISVILMGISLGIFVVLRWLIGKAKS</sequence>
<evidence type="ECO:0000250" key="1"/>
<evidence type="ECO:0000255" key="2"/>
<evidence type="ECO:0000255" key="3">
    <source>
        <dbReference type="PROSITE-ProRule" id="PRU00441"/>
    </source>
</evidence>
<evidence type="ECO:0000305" key="4"/>
<reference key="1">
    <citation type="journal article" date="2003" name="Mol. Microbiol.">
        <title>An integrated analysis of the genome of the hyperthermophilic archaeon Pyrococcus abyssi.</title>
        <authorList>
            <person name="Cohen G.N."/>
            <person name="Barbe V."/>
            <person name="Flament D."/>
            <person name="Galperin M."/>
            <person name="Heilig R."/>
            <person name="Lecompte O."/>
            <person name="Poch O."/>
            <person name="Prieur D."/>
            <person name="Querellou J."/>
            <person name="Ripp R."/>
            <person name="Thierry J.-C."/>
            <person name="Van der Oost J."/>
            <person name="Weissenbach J."/>
            <person name="Zivanovic Y."/>
            <person name="Forterre P."/>
        </authorList>
    </citation>
    <scope>NUCLEOTIDE SEQUENCE [LARGE SCALE GENOMIC DNA]</scope>
    <source>
        <strain>GE5 / Orsay</strain>
    </source>
</reference>
<reference key="2">
    <citation type="journal article" date="2012" name="Curr. Microbiol.">
        <title>Re-annotation of two hyperthermophilic archaea Pyrococcus abyssi GE5 and Pyrococcus furiosus DSM 3638.</title>
        <authorList>
            <person name="Gao J."/>
            <person name="Wang J."/>
        </authorList>
    </citation>
    <scope>GENOME REANNOTATION</scope>
    <source>
        <strain>GE5 / Orsay</strain>
    </source>
</reference>
<proteinExistence type="inferred from homology"/>
<accession>Q9V2C1</accession>
<accession>G8ZFY8</accession>
<comment type="function">
    <text evidence="1">Part of the ABC transporter complex WtpABC involved in molybdate/tungstate import. Probably responsible for the translocation of the substrate across the membrane (By similarity).</text>
</comment>
<comment type="subunit">
    <text evidence="1">The complex is composed of two ATP-binding proteins (WtpC), two transmembrane proteins (WtpB) and a solute-binding protein (WtpA).</text>
</comment>
<comment type="subcellular location">
    <subcellularLocation>
        <location evidence="1">Cell membrane</location>
        <topology evidence="3">Multi-pass membrane protein</topology>
    </subcellularLocation>
</comment>
<comment type="similarity">
    <text evidence="4">Belongs to the binding-protein-dependent transport system permease family.</text>
</comment>
<gene>
    <name type="primary">wtpB</name>
    <name type="ordered locus">PYRAB01530</name>
    <name type="ORF">PAB0102</name>
</gene>
<dbReference type="EMBL" id="AJ248283">
    <property type="protein sequence ID" value="CAB49077.1"/>
    <property type="molecule type" value="Genomic_DNA"/>
</dbReference>
<dbReference type="EMBL" id="HE613800">
    <property type="protein sequence ID" value="CCE69529.1"/>
    <property type="molecule type" value="Genomic_DNA"/>
</dbReference>
<dbReference type="PIR" id="F75203">
    <property type="entry name" value="F75203"/>
</dbReference>
<dbReference type="RefSeq" id="WP_010867277.1">
    <property type="nucleotide sequence ID" value="NC_000868.1"/>
</dbReference>
<dbReference type="SMR" id="Q9V2C1"/>
<dbReference type="STRING" id="272844.PAB0102"/>
<dbReference type="KEGG" id="pab:PAB0102"/>
<dbReference type="PATRIC" id="fig|272844.11.peg.166"/>
<dbReference type="eggNOG" id="arCOG00164">
    <property type="taxonomic scope" value="Archaea"/>
</dbReference>
<dbReference type="HOGENOM" id="CLU_016047_14_1_2"/>
<dbReference type="OrthoDB" id="11163at2157"/>
<dbReference type="PhylomeDB" id="Q9V2C1"/>
<dbReference type="Proteomes" id="UP000000810">
    <property type="component" value="Chromosome"/>
</dbReference>
<dbReference type="Proteomes" id="UP000009139">
    <property type="component" value="Chromosome"/>
</dbReference>
<dbReference type="GO" id="GO:0005886">
    <property type="term" value="C:plasma membrane"/>
    <property type="evidence" value="ECO:0007669"/>
    <property type="project" value="UniProtKB-SubCell"/>
</dbReference>
<dbReference type="GO" id="GO:0055085">
    <property type="term" value="P:transmembrane transport"/>
    <property type="evidence" value="ECO:0007669"/>
    <property type="project" value="InterPro"/>
</dbReference>
<dbReference type="CDD" id="cd06261">
    <property type="entry name" value="TM_PBP2"/>
    <property type="match status" value="1"/>
</dbReference>
<dbReference type="Gene3D" id="1.10.3720.10">
    <property type="entry name" value="MetI-like"/>
    <property type="match status" value="1"/>
</dbReference>
<dbReference type="InterPro" id="IPR000515">
    <property type="entry name" value="MetI-like"/>
</dbReference>
<dbReference type="InterPro" id="IPR035906">
    <property type="entry name" value="MetI-like_sf"/>
</dbReference>
<dbReference type="InterPro" id="IPR053405">
    <property type="entry name" value="Mo/W_ABC_Transporter_Permease"/>
</dbReference>
<dbReference type="NCBIfam" id="NF040839">
    <property type="entry name" value="tungstate_WtpB"/>
    <property type="match status" value="1"/>
</dbReference>
<dbReference type="PANTHER" id="PTHR30183">
    <property type="entry name" value="MOLYBDENUM TRANSPORT SYSTEM PERMEASE PROTEIN MODB"/>
    <property type="match status" value="1"/>
</dbReference>
<dbReference type="PANTHER" id="PTHR30183:SF3">
    <property type="entry name" value="MOLYBDENUM TRANSPORT SYSTEM PERMEASE PROTEIN MODB"/>
    <property type="match status" value="1"/>
</dbReference>
<dbReference type="Pfam" id="PF00528">
    <property type="entry name" value="BPD_transp_1"/>
    <property type="match status" value="1"/>
</dbReference>
<dbReference type="SUPFAM" id="SSF161098">
    <property type="entry name" value="MetI-like"/>
    <property type="match status" value="1"/>
</dbReference>
<dbReference type="PROSITE" id="PS50928">
    <property type="entry name" value="ABC_TM1"/>
    <property type="match status" value="1"/>
</dbReference>
<keyword id="KW-1003">Cell membrane</keyword>
<keyword id="KW-0472">Membrane</keyword>
<keyword id="KW-0500">Molybdenum</keyword>
<keyword id="KW-0812">Transmembrane</keyword>
<keyword id="KW-1133">Transmembrane helix</keyword>
<keyword id="KW-0813">Transport</keyword>
<organism>
    <name type="scientific">Pyrococcus abyssi (strain GE5 / Orsay)</name>
    <dbReference type="NCBI Taxonomy" id="272844"/>
    <lineage>
        <taxon>Archaea</taxon>
        <taxon>Methanobacteriati</taxon>
        <taxon>Methanobacteriota</taxon>
        <taxon>Thermococci</taxon>
        <taxon>Thermococcales</taxon>
        <taxon>Thermococcaceae</taxon>
        <taxon>Pyrococcus</taxon>
    </lineage>
</organism>